<feature type="chain" id="PRO_0000077904" description="Uncharacterized protein HI_0275">
    <location>
        <begin position="1"/>
        <end position="551"/>
    </location>
</feature>
<feature type="transmembrane region" description="Helical" evidence="1">
    <location>
        <begin position="1"/>
        <end position="21"/>
    </location>
</feature>
<feature type="transmembrane region" description="Helical" evidence="1">
    <location>
        <begin position="25"/>
        <end position="45"/>
    </location>
</feature>
<feature type="transmembrane region" description="Helical" evidence="1">
    <location>
        <begin position="99"/>
        <end position="119"/>
    </location>
</feature>
<feature type="transmembrane region" description="Helical" evidence="1">
    <location>
        <begin position="124"/>
        <end position="144"/>
    </location>
</feature>
<feature type="transmembrane region" description="Helical" evidence="1">
    <location>
        <begin position="266"/>
        <end position="286"/>
    </location>
</feature>
<feature type="transmembrane region" description="Helical" evidence="1">
    <location>
        <begin position="490"/>
        <end position="510"/>
    </location>
</feature>
<protein>
    <recommendedName>
        <fullName>Uncharacterized protein HI_0275</fullName>
    </recommendedName>
</protein>
<dbReference type="EMBL" id="L42023">
    <property type="protein sequence ID" value="AAC21949.1"/>
    <property type="molecule type" value="Genomic_DNA"/>
</dbReference>
<dbReference type="PIR" id="B64005">
    <property type="entry name" value="B64005"/>
</dbReference>
<dbReference type="RefSeq" id="NP_438444.1">
    <property type="nucleotide sequence ID" value="NC_000907.1"/>
</dbReference>
<dbReference type="SMR" id="P43975"/>
<dbReference type="EnsemblBacteria" id="AAC21949">
    <property type="protein sequence ID" value="AAC21949"/>
    <property type="gene ID" value="HI_0275"/>
</dbReference>
<dbReference type="KEGG" id="hin:HI_0275"/>
<dbReference type="PATRIC" id="fig|71421.8.peg.290"/>
<dbReference type="eggNOG" id="COG1368">
    <property type="taxonomic scope" value="Bacteria"/>
</dbReference>
<dbReference type="HOGENOM" id="CLU_036702_0_0_6"/>
<dbReference type="OrthoDB" id="5363296at2"/>
<dbReference type="PhylomeDB" id="P43975"/>
<dbReference type="BioCyc" id="HINF71421:G1GJ1-295-MONOMER"/>
<dbReference type="Proteomes" id="UP000000579">
    <property type="component" value="Chromosome"/>
</dbReference>
<dbReference type="GO" id="GO:0016020">
    <property type="term" value="C:membrane"/>
    <property type="evidence" value="ECO:0000318"/>
    <property type="project" value="GO_Central"/>
</dbReference>
<dbReference type="GO" id="GO:0005886">
    <property type="term" value="C:plasma membrane"/>
    <property type="evidence" value="ECO:0007669"/>
    <property type="project" value="UniProtKB-SubCell"/>
</dbReference>
<dbReference type="GO" id="GO:0016740">
    <property type="term" value="F:transferase activity"/>
    <property type="evidence" value="ECO:0000315"/>
    <property type="project" value="BHF-UCL"/>
</dbReference>
<dbReference type="GO" id="GO:0009244">
    <property type="term" value="P:lipopolysaccharide core region biosynthetic process"/>
    <property type="evidence" value="ECO:0000315"/>
    <property type="project" value="BHF-UCL"/>
</dbReference>
<dbReference type="CDD" id="cd16015">
    <property type="entry name" value="LTA_synthase"/>
    <property type="match status" value="1"/>
</dbReference>
<dbReference type="Gene3D" id="3.40.720.10">
    <property type="entry name" value="Alkaline Phosphatase, subunit A"/>
    <property type="match status" value="1"/>
</dbReference>
<dbReference type="InterPro" id="IPR017850">
    <property type="entry name" value="Alkaline_phosphatase_core_sf"/>
</dbReference>
<dbReference type="InterPro" id="IPR050448">
    <property type="entry name" value="OpgB/LTA_synthase_biosynth"/>
</dbReference>
<dbReference type="InterPro" id="IPR000917">
    <property type="entry name" value="Sulfatase_N"/>
</dbReference>
<dbReference type="PANTHER" id="PTHR47371">
    <property type="entry name" value="LIPOTEICHOIC ACID SYNTHASE"/>
    <property type="match status" value="1"/>
</dbReference>
<dbReference type="PANTHER" id="PTHR47371:SF3">
    <property type="entry name" value="PHOSPHOGLYCEROL TRANSFERASE I"/>
    <property type="match status" value="1"/>
</dbReference>
<dbReference type="Pfam" id="PF00884">
    <property type="entry name" value="Sulfatase"/>
    <property type="match status" value="1"/>
</dbReference>
<dbReference type="SUPFAM" id="SSF53649">
    <property type="entry name" value="Alkaline phosphatase-like"/>
    <property type="match status" value="1"/>
</dbReference>
<comment type="subcellular location">
    <subcellularLocation>
        <location evidence="2">Cell membrane</location>
        <topology evidence="2">Multi-pass membrane protein</topology>
    </subcellularLocation>
</comment>
<gene>
    <name type="ordered locus">HI_0275</name>
</gene>
<reference key="1">
    <citation type="journal article" date="1995" name="Science">
        <title>Whole-genome random sequencing and assembly of Haemophilus influenzae Rd.</title>
        <authorList>
            <person name="Fleischmann R.D."/>
            <person name="Adams M.D."/>
            <person name="White O."/>
            <person name="Clayton R.A."/>
            <person name="Kirkness E.F."/>
            <person name="Kerlavage A.R."/>
            <person name="Bult C.J."/>
            <person name="Tomb J.-F."/>
            <person name="Dougherty B.A."/>
            <person name="Merrick J.M."/>
            <person name="McKenney K."/>
            <person name="Sutton G.G."/>
            <person name="FitzHugh W."/>
            <person name="Fields C.A."/>
            <person name="Gocayne J.D."/>
            <person name="Scott J.D."/>
            <person name="Shirley R."/>
            <person name="Liu L.-I."/>
            <person name="Glodek A."/>
            <person name="Kelley J.M."/>
            <person name="Weidman J.F."/>
            <person name="Phillips C.A."/>
            <person name="Spriggs T."/>
            <person name="Hedblom E."/>
            <person name="Cotton M.D."/>
            <person name="Utterback T.R."/>
            <person name="Hanna M.C."/>
            <person name="Nguyen D.T."/>
            <person name="Saudek D.M."/>
            <person name="Brandon R.C."/>
            <person name="Fine L.D."/>
            <person name="Fritchman J.L."/>
            <person name="Fuhrmann J.L."/>
            <person name="Geoghagen N.S.M."/>
            <person name="Gnehm C.L."/>
            <person name="McDonald L.A."/>
            <person name="Small K.V."/>
            <person name="Fraser C.M."/>
            <person name="Smith H.O."/>
            <person name="Venter J.C."/>
        </authorList>
    </citation>
    <scope>NUCLEOTIDE SEQUENCE [LARGE SCALE GENOMIC DNA]</scope>
    <source>
        <strain>ATCC 51907 / DSM 11121 / KW20 / Rd</strain>
    </source>
</reference>
<name>Y275_HAEIN</name>
<accession>P43975</accession>
<evidence type="ECO:0000255" key="1"/>
<evidence type="ECO:0000305" key="2"/>
<keyword id="KW-1003">Cell membrane</keyword>
<keyword id="KW-0472">Membrane</keyword>
<keyword id="KW-1185">Reference proteome</keyword>
<keyword id="KW-0812">Transmembrane</keyword>
<keyword id="KW-1133">Transmembrane helix</keyword>
<sequence length="551" mass="62257">MIAYIFLALFTIAAVIFIVNSHYRWTYFFAITLFTFLFGGMLMVSSQWQRALNFSSVLFVVLMLFHRLKIHYYKQPLLISDFFLVVDWRNWETLIHYKGALFGVIGLLALLGYAIFGFNDVESLGVLGNSIGALLFIVSFSLMWHYSKNPSAVQVWLDSLPDDGRDVFLNLPMSCRGIFFKVPNFDGNSQNFIEKMTALSSDANNLSETKPDIVVTLMESTLNPHQFAFSQQSIPPLSMFEPQNDTVFASPLRVHTFAGATWKSEFAFLAGVPSTDFGALASGVFYSVVPHLQSGLVKNLKAQGYFCVALSPFTKGNYNAKSAYDHFGFDLMLQPQDLGYPAPISKNLWDISSEEMMKYTRMILEKQHPALENVDQPMFVYVLTMREHGPYELGMENTFNLQMPNLGAKSISALNDYTQRIVALNDAIEGINNYLHERKKPFVLGYFGDHQVAFDNAIPPKKGDYAQPDYVTQFVVRSNCASQFKQEQKFLDLAFAGGVLMNVAGLSAEDEFMKANMAMCKLSDGKLEDSSDIQLLNNYRHYLYQTLAIAR</sequence>
<proteinExistence type="predicted"/>
<organism>
    <name type="scientific">Haemophilus influenzae (strain ATCC 51907 / DSM 11121 / KW20 / Rd)</name>
    <dbReference type="NCBI Taxonomy" id="71421"/>
    <lineage>
        <taxon>Bacteria</taxon>
        <taxon>Pseudomonadati</taxon>
        <taxon>Pseudomonadota</taxon>
        <taxon>Gammaproteobacteria</taxon>
        <taxon>Pasteurellales</taxon>
        <taxon>Pasteurellaceae</taxon>
        <taxon>Haemophilus</taxon>
    </lineage>
</organism>